<reference key="1">
    <citation type="journal article" date="2003" name="Nature">
        <title>The genome sequence of Bacillus anthracis Ames and comparison to closely related bacteria.</title>
        <authorList>
            <person name="Read T.D."/>
            <person name="Peterson S.N."/>
            <person name="Tourasse N.J."/>
            <person name="Baillie L.W."/>
            <person name="Paulsen I.T."/>
            <person name="Nelson K.E."/>
            <person name="Tettelin H."/>
            <person name="Fouts D.E."/>
            <person name="Eisen J.A."/>
            <person name="Gill S.R."/>
            <person name="Holtzapple E.K."/>
            <person name="Okstad O.A."/>
            <person name="Helgason E."/>
            <person name="Rilstone J."/>
            <person name="Wu M."/>
            <person name="Kolonay J.F."/>
            <person name="Beanan M.J."/>
            <person name="Dodson R.J."/>
            <person name="Brinkac L.M."/>
            <person name="Gwinn M.L."/>
            <person name="DeBoy R.T."/>
            <person name="Madpu R."/>
            <person name="Daugherty S.C."/>
            <person name="Durkin A.S."/>
            <person name="Haft D.H."/>
            <person name="Nelson W.C."/>
            <person name="Peterson J.D."/>
            <person name="Pop M."/>
            <person name="Khouri H.M."/>
            <person name="Radune D."/>
            <person name="Benton J.L."/>
            <person name="Mahamoud Y."/>
            <person name="Jiang L."/>
            <person name="Hance I.R."/>
            <person name="Weidman J.F."/>
            <person name="Berry K.J."/>
            <person name="Plaut R.D."/>
            <person name="Wolf A.M."/>
            <person name="Watkins K.L."/>
            <person name="Nierman W.C."/>
            <person name="Hazen A."/>
            <person name="Cline R.T."/>
            <person name="Redmond C."/>
            <person name="Thwaite J.E."/>
            <person name="White O."/>
            <person name="Salzberg S.L."/>
            <person name="Thomason B."/>
            <person name="Friedlander A.M."/>
            <person name="Koehler T.M."/>
            <person name="Hanna P.C."/>
            <person name="Kolstoe A.-B."/>
            <person name="Fraser C.M."/>
        </authorList>
    </citation>
    <scope>NUCLEOTIDE SEQUENCE [LARGE SCALE GENOMIC DNA]</scope>
    <source>
        <strain>Ames / isolate Porton</strain>
    </source>
</reference>
<reference key="2">
    <citation type="journal article" date="2009" name="J. Bacteriol.">
        <title>The complete genome sequence of Bacillus anthracis Ames 'Ancestor'.</title>
        <authorList>
            <person name="Ravel J."/>
            <person name="Jiang L."/>
            <person name="Stanley S.T."/>
            <person name="Wilson M.R."/>
            <person name="Decker R.S."/>
            <person name="Read T.D."/>
            <person name="Worsham P."/>
            <person name="Keim P.S."/>
            <person name="Salzberg S.L."/>
            <person name="Fraser-Liggett C.M."/>
            <person name="Rasko D.A."/>
        </authorList>
    </citation>
    <scope>NUCLEOTIDE SEQUENCE [LARGE SCALE GENOMIC DNA]</scope>
    <source>
        <strain>Ames ancestor</strain>
    </source>
</reference>
<reference key="3">
    <citation type="submission" date="2004-01" db="EMBL/GenBank/DDBJ databases">
        <title>Complete genome sequence of Bacillus anthracis Sterne.</title>
        <authorList>
            <person name="Brettin T.S."/>
            <person name="Bruce D."/>
            <person name="Challacombe J.F."/>
            <person name="Gilna P."/>
            <person name="Han C."/>
            <person name="Hill K."/>
            <person name="Hitchcock P."/>
            <person name="Jackson P."/>
            <person name="Keim P."/>
            <person name="Longmire J."/>
            <person name="Lucas S."/>
            <person name="Okinaka R."/>
            <person name="Richardson P."/>
            <person name="Rubin E."/>
            <person name="Tice H."/>
        </authorList>
    </citation>
    <scope>NUCLEOTIDE SEQUENCE [LARGE SCALE GENOMIC DNA]</scope>
    <source>
        <strain>Sterne</strain>
    </source>
</reference>
<accession>Q81VV3</accession>
<accession>Q6I4V7</accession>
<accession>Q6KYK1</accession>
<sequence>MEKQVRVRYAPSPTGHLHIGNARTALFNYLFARHQDGKFIIRIEDTDVKRNVAGGEESQLKYLKWLGMDWDEGVDVGGEFGPYRQTERLDIYKKLYEDLLERGLAYKCYMTEEELEAEREGQIARGETPRYAGNHRDLTEAQVKEFEAEGRIPSIRFRVPADRDYTFKDIVKDEVAFHSNDFGDFVIVKKDGIPTYNFAVAVDDHLMEITHVLRGDDHISNTPKQMMIYEAFGWDIPQFGHMTLIVNESRKKLSKRDESIIQFIEQYKELGYLPEAIFNFIALLGWSPVGEEEIFSQEEFIKMFDAARLSKSPALFDSQKLKWMNNQYMKKQDLDTVVELSLPHLVKAGRIGETLSEQEQAWIRDVIALYHEQMSFGAEIVELSEMFFKDHVDYEEEGQEVLKGEQVPEVLRAFAGQVEALEAMEPAAIKAAIKAVQKETGHKGKNLFMPIRVATTGQTHGPELPNAIALLGKEKVLNRLQKVIG</sequence>
<gene>
    <name evidence="1" type="primary">gltX</name>
    <name type="ordered locus">BA_0086</name>
    <name type="ordered locus">GBAA_0086</name>
    <name type="ordered locus">BAS0087</name>
</gene>
<keyword id="KW-0030">Aminoacyl-tRNA synthetase</keyword>
<keyword id="KW-0067">ATP-binding</keyword>
<keyword id="KW-0963">Cytoplasm</keyword>
<keyword id="KW-0436">Ligase</keyword>
<keyword id="KW-0547">Nucleotide-binding</keyword>
<keyword id="KW-0648">Protein biosynthesis</keyword>
<keyword id="KW-1185">Reference proteome</keyword>
<proteinExistence type="inferred from homology"/>
<feature type="chain" id="PRO_0000119498" description="Glutamate--tRNA ligase">
    <location>
        <begin position="1"/>
        <end position="485"/>
    </location>
</feature>
<feature type="short sequence motif" description="'HIGH' region" evidence="1">
    <location>
        <begin position="11"/>
        <end position="21"/>
    </location>
</feature>
<feature type="short sequence motif" description="'KMSKS' region" evidence="1">
    <location>
        <begin position="252"/>
        <end position="256"/>
    </location>
</feature>
<feature type="binding site" evidence="1">
    <location>
        <position position="255"/>
    </location>
    <ligand>
        <name>ATP</name>
        <dbReference type="ChEBI" id="CHEBI:30616"/>
    </ligand>
</feature>
<dbReference type="EC" id="6.1.1.17" evidence="1"/>
<dbReference type="EMBL" id="AE016879">
    <property type="protein sequence ID" value="AAP24141.1"/>
    <property type="molecule type" value="Genomic_DNA"/>
</dbReference>
<dbReference type="EMBL" id="AE017334">
    <property type="protein sequence ID" value="AAT29166.1"/>
    <property type="molecule type" value="Genomic_DNA"/>
</dbReference>
<dbReference type="EMBL" id="AE017225">
    <property type="protein sequence ID" value="AAT52424.1"/>
    <property type="molecule type" value="Genomic_DNA"/>
</dbReference>
<dbReference type="RefSeq" id="NP_842655.1">
    <property type="nucleotide sequence ID" value="NC_003997.3"/>
</dbReference>
<dbReference type="RefSeq" id="WP_000415154.1">
    <property type="nucleotide sequence ID" value="NZ_WXXJ01000051.1"/>
</dbReference>
<dbReference type="RefSeq" id="YP_026373.1">
    <property type="nucleotide sequence ID" value="NC_005945.1"/>
</dbReference>
<dbReference type="SMR" id="Q81VV3"/>
<dbReference type="IntAct" id="Q81VV3">
    <property type="interactions" value="5"/>
</dbReference>
<dbReference type="STRING" id="261594.GBAA_0086"/>
<dbReference type="DNASU" id="1085804"/>
<dbReference type="GeneID" id="93010966"/>
<dbReference type="KEGG" id="ban:BA_0086"/>
<dbReference type="KEGG" id="bar:GBAA_0086"/>
<dbReference type="KEGG" id="bat:BAS0087"/>
<dbReference type="PATRIC" id="fig|198094.11.peg.84"/>
<dbReference type="eggNOG" id="COG0008">
    <property type="taxonomic scope" value="Bacteria"/>
</dbReference>
<dbReference type="HOGENOM" id="CLU_015768_6_1_9"/>
<dbReference type="OMA" id="QAPRYDN"/>
<dbReference type="OrthoDB" id="9807503at2"/>
<dbReference type="Proteomes" id="UP000000427">
    <property type="component" value="Chromosome"/>
</dbReference>
<dbReference type="Proteomes" id="UP000000594">
    <property type="component" value="Chromosome"/>
</dbReference>
<dbReference type="GO" id="GO:0005829">
    <property type="term" value="C:cytosol"/>
    <property type="evidence" value="ECO:0007669"/>
    <property type="project" value="TreeGrafter"/>
</dbReference>
<dbReference type="GO" id="GO:0005524">
    <property type="term" value="F:ATP binding"/>
    <property type="evidence" value="ECO:0007669"/>
    <property type="project" value="UniProtKB-UniRule"/>
</dbReference>
<dbReference type="GO" id="GO:0004818">
    <property type="term" value="F:glutamate-tRNA ligase activity"/>
    <property type="evidence" value="ECO:0007669"/>
    <property type="project" value="UniProtKB-UniRule"/>
</dbReference>
<dbReference type="GO" id="GO:0000049">
    <property type="term" value="F:tRNA binding"/>
    <property type="evidence" value="ECO:0007669"/>
    <property type="project" value="InterPro"/>
</dbReference>
<dbReference type="GO" id="GO:0008270">
    <property type="term" value="F:zinc ion binding"/>
    <property type="evidence" value="ECO:0007669"/>
    <property type="project" value="InterPro"/>
</dbReference>
<dbReference type="GO" id="GO:0006424">
    <property type="term" value="P:glutamyl-tRNA aminoacylation"/>
    <property type="evidence" value="ECO:0007669"/>
    <property type="project" value="UniProtKB-UniRule"/>
</dbReference>
<dbReference type="CDD" id="cd00808">
    <property type="entry name" value="GluRS_core"/>
    <property type="match status" value="1"/>
</dbReference>
<dbReference type="FunFam" id="1.10.10.350:FF:000002">
    <property type="entry name" value="Glutamate--tRNA ligase"/>
    <property type="match status" value="1"/>
</dbReference>
<dbReference type="FunFam" id="3.40.50.620:FF:000007">
    <property type="entry name" value="Glutamate--tRNA ligase"/>
    <property type="match status" value="1"/>
</dbReference>
<dbReference type="Gene3D" id="1.10.10.350">
    <property type="match status" value="1"/>
</dbReference>
<dbReference type="Gene3D" id="3.40.50.620">
    <property type="entry name" value="HUPs"/>
    <property type="match status" value="1"/>
</dbReference>
<dbReference type="HAMAP" id="MF_00022">
    <property type="entry name" value="Glu_tRNA_synth_type1"/>
    <property type="match status" value="1"/>
</dbReference>
<dbReference type="InterPro" id="IPR045462">
    <property type="entry name" value="aa-tRNA-synth_I_cd-bd"/>
</dbReference>
<dbReference type="InterPro" id="IPR020751">
    <property type="entry name" value="aa-tRNA-synth_I_codon-bd_sub2"/>
</dbReference>
<dbReference type="InterPro" id="IPR001412">
    <property type="entry name" value="aa-tRNA-synth_I_CS"/>
</dbReference>
<dbReference type="InterPro" id="IPR008925">
    <property type="entry name" value="aa_tRNA-synth_I_cd-bd_sf"/>
</dbReference>
<dbReference type="InterPro" id="IPR004527">
    <property type="entry name" value="Glu-tRNA-ligase_bac/mito"/>
</dbReference>
<dbReference type="InterPro" id="IPR000924">
    <property type="entry name" value="Glu/Gln-tRNA-synth"/>
</dbReference>
<dbReference type="InterPro" id="IPR020058">
    <property type="entry name" value="Glu/Gln-tRNA-synth_Ib_cat-dom"/>
</dbReference>
<dbReference type="InterPro" id="IPR049940">
    <property type="entry name" value="GluQ/Sye"/>
</dbReference>
<dbReference type="InterPro" id="IPR033910">
    <property type="entry name" value="GluRS_core"/>
</dbReference>
<dbReference type="InterPro" id="IPR014729">
    <property type="entry name" value="Rossmann-like_a/b/a_fold"/>
</dbReference>
<dbReference type="NCBIfam" id="TIGR00464">
    <property type="entry name" value="gltX_bact"/>
    <property type="match status" value="1"/>
</dbReference>
<dbReference type="PANTHER" id="PTHR43311">
    <property type="entry name" value="GLUTAMATE--TRNA LIGASE"/>
    <property type="match status" value="1"/>
</dbReference>
<dbReference type="PANTHER" id="PTHR43311:SF2">
    <property type="entry name" value="GLUTAMATE--TRNA LIGASE, MITOCHONDRIAL-RELATED"/>
    <property type="match status" value="1"/>
</dbReference>
<dbReference type="Pfam" id="PF19269">
    <property type="entry name" value="Anticodon_2"/>
    <property type="match status" value="1"/>
</dbReference>
<dbReference type="Pfam" id="PF00749">
    <property type="entry name" value="tRNA-synt_1c"/>
    <property type="match status" value="1"/>
</dbReference>
<dbReference type="PRINTS" id="PR00987">
    <property type="entry name" value="TRNASYNTHGLU"/>
</dbReference>
<dbReference type="SUPFAM" id="SSF48163">
    <property type="entry name" value="An anticodon-binding domain of class I aminoacyl-tRNA synthetases"/>
    <property type="match status" value="1"/>
</dbReference>
<dbReference type="SUPFAM" id="SSF52374">
    <property type="entry name" value="Nucleotidylyl transferase"/>
    <property type="match status" value="1"/>
</dbReference>
<dbReference type="PROSITE" id="PS00178">
    <property type="entry name" value="AA_TRNA_LIGASE_I"/>
    <property type="match status" value="1"/>
</dbReference>
<protein>
    <recommendedName>
        <fullName evidence="1">Glutamate--tRNA ligase</fullName>
        <ecNumber evidence="1">6.1.1.17</ecNumber>
    </recommendedName>
    <alternativeName>
        <fullName evidence="1">Glutamyl-tRNA synthetase</fullName>
        <shortName evidence="1">GluRS</shortName>
    </alternativeName>
</protein>
<name>SYE_BACAN</name>
<comment type="function">
    <text evidence="1">Catalyzes the attachment of glutamate to tRNA(Glu) in a two-step reaction: glutamate is first activated by ATP to form Glu-AMP and then transferred to the acceptor end of tRNA(Glu).</text>
</comment>
<comment type="catalytic activity">
    <reaction evidence="1">
        <text>tRNA(Glu) + L-glutamate + ATP = L-glutamyl-tRNA(Glu) + AMP + diphosphate</text>
        <dbReference type="Rhea" id="RHEA:23540"/>
        <dbReference type="Rhea" id="RHEA-COMP:9663"/>
        <dbReference type="Rhea" id="RHEA-COMP:9680"/>
        <dbReference type="ChEBI" id="CHEBI:29985"/>
        <dbReference type="ChEBI" id="CHEBI:30616"/>
        <dbReference type="ChEBI" id="CHEBI:33019"/>
        <dbReference type="ChEBI" id="CHEBI:78442"/>
        <dbReference type="ChEBI" id="CHEBI:78520"/>
        <dbReference type="ChEBI" id="CHEBI:456215"/>
        <dbReference type="EC" id="6.1.1.17"/>
    </reaction>
</comment>
<comment type="subunit">
    <text evidence="1">Monomer.</text>
</comment>
<comment type="subcellular location">
    <subcellularLocation>
        <location evidence="1">Cytoplasm</location>
    </subcellularLocation>
</comment>
<comment type="similarity">
    <text evidence="1">Belongs to the class-I aminoacyl-tRNA synthetase family. Glutamate--tRNA ligase type 1 subfamily.</text>
</comment>
<organism>
    <name type="scientific">Bacillus anthracis</name>
    <dbReference type="NCBI Taxonomy" id="1392"/>
    <lineage>
        <taxon>Bacteria</taxon>
        <taxon>Bacillati</taxon>
        <taxon>Bacillota</taxon>
        <taxon>Bacilli</taxon>
        <taxon>Bacillales</taxon>
        <taxon>Bacillaceae</taxon>
        <taxon>Bacillus</taxon>
        <taxon>Bacillus cereus group</taxon>
    </lineage>
</organism>
<evidence type="ECO:0000255" key="1">
    <source>
        <dbReference type="HAMAP-Rule" id="MF_00022"/>
    </source>
</evidence>